<sequence>MSGNTIGKLFTITTAGESHGEALIGIVDGCPPGLALTEVDLQDDLDLRKPGTSRHTSQRHEEDLVKILSGTFEGKTTGTPIALIIQNTDQRSKDYGNIKDTFRPGHADYTYHQKYGIRDYRGGGRSSARETAMRVACGGIAKKYLKQEYNIKIKGYLSQLGPIKIENSDWLEVHNNPFFCLDANKVKILEKYMDTLRKSGDSVGARINIIVNNMPVGLGEPIFDRLDADIAHSMMSINAVKGVEIGDGFRVVNQKGTEHRDAITLTGFKSNHAGGIFGGISSGQDILVSIALKPTSSLSLPIESIDKRGGPIEVITKGRHDPCVGIRATPIAEAMLAITIMDHVMRHRAQNLNIESITPIIPASI</sequence>
<comment type="function">
    <text evidence="1">Catalyzes the anti-1,4-elimination of the C-3 phosphate and the C-6 proR hydrogen from 5-enolpyruvylshikimate-3-phosphate (EPSP) to yield chorismate, which is the branch point compound that serves as the starting substrate for the three terminal pathways of aromatic amino acid biosynthesis. This reaction introduces a second double bond into the aromatic ring system.</text>
</comment>
<comment type="catalytic activity">
    <reaction evidence="1">
        <text>5-O-(1-carboxyvinyl)-3-phosphoshikimate = chorismate + phosphate</text>
        <dbReference type="Rhea" id="RHEA:21020"/>
        <dbReference type="ChEBI" id="CHEBI:29748"/>
        <dbReference type="ChEBI" id="CHEBI:43474"/>
        <dbReference type="ChEBI" id="CHEBI:57701"/>
        <dbReference type="EC" id="4.2.3.5"/>
    </reaction>
</comment>
<comment type="cofactor">
    <cofactor evidence="1">
        <name>FMNH2</name>
        <dbReference type="ChEBI" id="CHEBI:57618"/>
    </cofactor>
    <text evidence="1">Reduced FMN (FMNH(2)).</text>
</comment>
<comment type="pathway">
    <text evidence="1">Metabolic intermediate biosynthesis; chorismate biosynthesis; chorismate from D-erythrose 4-phosphate and phosphoenolpyruvate: step 7/7.</text>
</comment>
<comment type="subunit">
    <text evidence="1">Homotetramer.</text>
</comment>
<comment type="similarity">
    <text evidence="1">Belongs to the chorismate synthase family.</text>
</comment>
<accession>A5CX05</accession>
<reference key="1">
    <citation type="journal article" date="2007" name="Curr. Biol.">
        <title>Reduced genome of the thioautotrophic intracellular symbiont in a deep-sea clam, Calyptogena okutanii.</title>
        <authorList>
            <person name="Kuwahara H."/>
            <person name="Yoshida T."/>
            <person name="Takaki Y."/>
            <person name="Shimamura S."/>
            <person name="Nishi S."/>
            <person name="Harada M."/>
            <person name="Matsuyama K."/>
            <person name="Takishita K."/>
            <person name="Kawato M."/>
            <person name="Uematsu K."/>
            <person name="Fujiwara Y."/>
            <person name="Sato T."/>
            <person name="Kato C."/>
            <person name="Kitagawa M."/>
            <person name="Kato I."/>
            <person name="Maruyama T."/>
        </authorList>
    </citation>
    <scope>NUCLEOTIDE SEQUENCE [LARGE SCALE GENOMIC DNA]</scope>
    <source>
        <strain>HA</strain>
    </source>
</reference>
<name>AROC_VESOH</name>
<organism>
    <name type="scientific">Vesicomyosocius okutanii subsp. Calyptogena okutanii (strain HA)</name>
    <dbReference type="NCBI Taxonomy" id="412965"/>
    <lineage>
        <taxon>Bacteria</taxon>
        <taxon>Pseudomonadati</taxon>
        <taxon>Pseudomonadota</taxon>
        <taxon>Gammaproteobacteria</taxon>
        <taxon>Candidatus Pseudothioglobaceae</taxon>
        <taxon>Candidatus Vesicomyosocius</taxon>
    </lineage>
</organism>
<protein>
    <recommendedName>
        <fullName evidence="1">Chorismate synthase</fullName>
        <shortName evidence="1">CS</shortName>
        <ecNumber evidence="1">4.2.3.5</ecNumber>
    </recommendedName>
    <alternativeName>
        <fullName evidence="1">5-enolpyruvylshikimate-3-phosphate phospholyase</fullName>
    </alternativeName>
</protein>
<feature type="chain" id="PRO_1000022571" description="Chorismate synthase">
    <location>
        <begin position="1"/>
        <end position="365"/>
    </location>
</feature>
<feature type="binding site" evidence="1">
    <location>
        <position position="48"/>
    </location>
    <ligand>
        <name>NADP(+)</name>
        <dbReference type="ChEBI" id="CHEBI:58349"/>
    </ligand>
</feature>
<feature type="binding site" evidence="1">
    <location>
        <position position="54"/>
    </location>
    <ligand>
        <name>NADP(+)</name>
        <dbReference type="ChEBI" id="CHEBI:58349"/>
    </ligand>
</feature>
<feature type="binding site" evidence="1">
    <location>
        <begin position="125"/>
        <end position="127"/>
    </location>
    <ligand>
        <name>FMN</name>
        <dbReference type="ChEBI" id="CHEBI:58210"/>
    </ligand>
</feature>
<feature type="binding site" evidence="1">
    <location>
        <begin position="238"/>
        <end position="239"/>
    </location>
    <ligand>
        <name>FMN</name>
        <dbReference type="ChEBI" id="CHEBI:58210"/>
    </ligand>
</feature>
<feature type="binding site" evidence="1">
    <location>
        <position position="278"/>
    </location>
    <ligand>
        <name>FMN</name>
        <dbReference type="ChEBI" id="CHEBI:58210"/>
    </ligand>
</feature>
<feature type="binding site" evidence="1">
    <location>
        <begin position="293"/>
        <end position="297"/>
    </location>
    <ligand>
        <name>FMN</name>
        <dbReference type="ChEBI" id="CHEBI:58210"/>
    </ligand>
</feature>
<feature type="binding site" evidence="1">
    <location>
        <position position="319"/>
    </location>
    <ligand>
        <name>FMN</name>
        <dbReference type="ChEBI" id="CHEBI:58210"/>
    </ligand>
</feature>
<proteinExistence type="inferred from homology"/>
<keyword id="KW-0028">Amino-acid biosynthesis</keyword>
<keyword id="KW-0057">Aromatic amino acid biosynthesis</keyword>
<keyword id="KW-0274">FAD</keyword>
<keyword id="KW-0285">Flavoprotein</keyword>
<keyword id="KW-0288">FMN</keyword>
<keyword id="KW-0456">Lyase</keyword>
<keyword id="KW-0521">NADP</keyword>
<keyword id="KW-1185">Reference proteome</keyword>
<dbReference type="EC" id="4.2.3.5" evidence="1"/>
<dbReference type="EMBL" id="AP009247">
    <property type="protein sequence ID" value="BAF61520.1"/>
    <property type="molecule type" value="Genomic_DNA"/>
</dbReference>
<dbReference type="RefSeq" id="WP_011929790.1">
    <property type="nucleotide sequence ID" value="NC_009465.1"/>
</dbReference>
<dbReference type="SMR" id="A5CX05"/>
<dbReference type="STRING" id="412965.COSY_0399"/>
<dbReference type="KEGG" id="vok:COSY_0399"/>
<dbReference type="eggNOG" id="COG0082">
    <property type="taxonomic scope" value="Bacteria"/>
</dbReference>
<dbReference type="HOGENOM" id="CLU_034547_0_2_6"/>
<dbReference type="OrthoDB" id="9771806at2"/>
<dbReference type="UniPathway" id="UPA00053">
    <property type="reaction ID" value="UER00090"/>
</dbReference>
<dbReference type="Proteomes" id="UP000000247">
    <property type="component" value="Chromosome"/>
</dbReference>
<dbReference type="GO" id="GO:0005829">
    <property type="term" value="C:cytosol"/>
    <property type="evidence" value="ECO:0007669"/>
    <property type="project" value="TreeGrafter"/>
</dbReference>
<dbReference type="GO" id="GO:0004107">
    <property type="term" value="F:chorismate synthase activity"/>
    <property type="evidence" value="ECO:0007669"/>
    <property type="project" value="UniProtKB-UniRule"/>
</dbReference>
<dbReference type="GO" id="GO:0010181">
    <property type="term" value="F:FMN binding"/>
    <property type="evidence" value="ECO:0007669"/>
    <property type="project" value="TreeGrafter"/>
</dbReference>
<dbReference type="GO" id="GO:0008652">
    <property type="term" value="P:amino acid biosynthetic process"/>
    <property type="evidence" value="ECO:0007669"/>
    <property type="project" value="UniProtKB-KW"/>
</dbReference>
<dbReference type="GO" id="GO:0009073">
    <property type="term" value="P:aromatic amino acid family biosynthetic process"/>
    <property type="evidence" value="ECO:0007669"/>
    <property type="project" value="UniProtKB-KW"/>
</dbReference>
<dbReference type="GO" id="GO:0009423">
    <property type="term" value="P:chorismate biosynthetic process"/>
    <property type="evidence" value="ECO:0007669"/>
    <property type="project" value="UniProtKB-UniRule"/>
</dbReference>
<dbReference type="CDD" id="cd07304">
    <property type="entry name" value="Chorismate_synthase"/>
    <property type="match status" value="1"/>
</dbReference>
<dbReference type="FunFam" id="3.60.150.10:FF:000001">
    <property type="entry name" value="Chorismate synthase"/>
    <property type="match status" value="1"/>
</dbReference>
<dbReference type="Gene3D" id="3.60.150.10">
    <property type="entry name" value="Chorismate synthase AroC"/>
    <property type="match status" value="1"/>
</dbReference>
<dbReference type="HAMAP" id="MF_00300">
    <property type="entry name" value="Chorismate_synth"/>
    <property type="match status" value="1"/>
</dbReference>
<dbReference type="InterPro" id="IPR000453">
    <property type="entry name" value="Chorismate_synth"/>
</dbReference>
<dbReference type="InterPro" id="IPR035904">
    <property type="entry name" value="Chorismate_synth_AroC_sf"/>
</dbReference>
<dbReference type="InterPro" id="IPR020541">
    <property type="entry name" value="Chorismate_synthase_CS"/>
</dbReference>
<dbReference type="NCBIfam" id="TIGR00033">
    <property type="entry name" value="aroC"/>
    <property type="match status" value="1"/>
</dbReference>
<dbReference type="NCBIfam" id="NF003793">
    <property type="entry name" value="PRK05382.1"/>
    <property type="match status" value="1"/>
</dbReference>
<dbReference type="PANTHER" id="PTHR21085">
    <property type="entry name" value="CHORISMATE SYNTHASE"/>
    <property type="match status" value="1"/>
</dbReference>
<dbReference type="PANTHER" id="PTHR21085:SF0">
    <property type="entry name" value="CHORISMATE SYNTHASE"/>
    <property type="match status" value="1"/>
</dbReference>
<dbReference type="Pfam" id="PF01264">
    <property type="entry name" value="Chorismate_synt"/>
    <property type="match status" value="1"/>
</dbReference>
<dbReference type="PIRSF" id="PIRSF001456">
    <property type="entry name" value="Chorismate_synth"/>
    <property type="match status" value="1"/>
</dbReference>
<dbReference type="SUPFAM" id="SSF103263">
    <property type="entry name" value="Chorismate synthase, AroC"/>
    <property type="match status" value="1"/>
</dbReference>
<dbReference type="PROSITE" id="PS00787">
    <property type="entry name" value="CHORISMATE_SYNTHASE_1"/>
    <property type="match status" value="1"/>
</dbReference>
<dbReference type="PROSITE" id="PS00789">
    <property type="entry name" value="CHORISMATE_SYNTHASE_3"/>
    <property type="match status" value="1"/>
</dbReference>
<gene>
    <name evidence="1" type="primary">aroC</name>
    <name type="ordered locus">COSY_0399</name>
</gene>
<evidence type="ECO:0000255" key="1">
    <source>
        <dbReference type="HAMAP-Rule" id="MF_00300"/>
    </source>
</evidence>